<gene>
    <name type="primary">P</name>
</gene>
<sequence length="65" mass="7955">MIIWILPCRMPMNLRKDERINISKTSSSKIKEINQLRHIIRKKNRQIQILIIMLNILRCCHRMKE</sequence>
<feature type="chain" id="PRO_0000288658" description="Protein C'">
    <location>
        <begin position="1"/>
        <end position="65"/>
    </location>
</feature>
<feature type="splice variant" id="VSP_025751" description="In isoform C." evidence="3">
    <location>
        <begin position="1"/>
        <end position="11"/>
    </location>
</feature>
<evidence type="ECO:0000250" key="1">
    <source>
        <dbReference type="UniProtKB" id="P0C2X2"/>
    </source>
</evidence>
<evidence type="ECO:0000269" key="2">
    <source>
    </source>
</evidence>
<evidence type="ECO:0000305" key="3"/>
<reference key="1">
    <citation type="journal article" date="1993" name="J. Virol.">
        <title>A small highly basic protein is encoded in overlapping frame within the P gene of vesicular stomatitis virus.</title>
        <authorList>
            <person name="Spiropoulou C.F."/>
            <person name="Nichol S.T."/>
        </authorList>
    </citation>
    <scope>NUCLEOTIDE SEQUENCE [GENOMIC RNA]</scope>
    <scope>CHARACTERIZATION</scope>
</reference>
<reference key="2">
    <citation type="journal article" date="1996" name="Virology">
        <title>Identification of a set of proteins (C' and C) encoded by the bicistronic P gene of the Indiana serotype of vesicular stomatitis virus and analysis of their effect on transcription by the viral RNA polymerase.</title>
        <authorList>
            <person name="Peluso R.W."/>
            <person name="Richardson J.C."/>
            <person name="Talon J."/>
            <person name="Lock M."/>
        </authorList>
    </citation>
    <scope>ALTERNATIVE INITIATION</scope>
</reference>
<organismHost>
    <name type="scientific">Aedes</name>
    <dbReference type="NCBI Taxonomy" id="7158"/>
</organismHost>
<organismHost>
    <name type="scientific">Bos taurus</name>
    <name type="common">Bovine</name>
    <dbReference type="NCBI Taxonomy" id="9913"/>
</organismHost>
<organismHost>
    <name type="scientific">Culicoides</name>
    <dbReference type="NCBI Taxonomy" id="58271"/>
</organismHost>
<organismHost>
    <name type="scientific">Equus asinus</name>
    <name type="common">Donkey</name>
    <name type="synonym">Equus africanus asinus</name>
    <dbReference type="NCBI Taxonomy" id="9793"/>
</organismHost>
<organismHost>
    <name type="scientific">Equus caballus</name>
    <name type="common">Horse</name>
    <dbReference type="NCBI Taxonomy" id="9796"/>
</organismHost>
<organismHost>
    <name type="scientific">Homo sapiens</name>
    <name type="common">Human</name>
    <dbReference type="NCBI Taxonomy" id="9606"/>
</organismHost>
<organismHost>
    <name type="scientific">Lutzomyia</name>
    <dbReference type="NCBI Taxonomy" id="252607"/>
</organismHost>
<organismHost>
    <name type="scientific">Musca domestica</name>
    <name type="common">House fly</name>
    <dbReference type="NCBI Taxonomy" id="7370"/>
</organismHost>
<organismHost>
    <name type="scientific">Simuliidae</name>
    <name type="common">black flies</name>
    <dbReference type="NCBI Taxonomy" id="7190"/>
</organismHost>
<organismHost>
    <name type="scientific">Sus scrofa</name>
    <name type="common">Pig</name>
    <dbReference type="NCBI Taxonomy" id="9823"/>
</organismHost>
<name>C_VSNJO</name>
<dbReference type="EMBL" id="S61075">
    <property type="protein sequence ID" value="AAB26736.1"/>
    <property type="molecule type" value="Genomic_RNA"/>
</dbReference>
<dbReference type="SMR" id="Q86609"/>
<dbReference type="Proteomes" id="UP000007626">
    <property type="component" value="Genome"/>
</dbReference>
<accession>Q86609</accession>
<protein>
    <recommendedName>
        <fullName>Protein C'</fullName>
    </recommendedName>
</protein>
<comment type="function">
    <text evidence="1">Seems to stimulates transcription by the viral polymerase. May play a role in viral pathogenesis or transmission by insects vectors.</text>
</comment>
<comment type="alternative products">
    <event type="alternative initiation"/>
    <isoform>
        <id>Q86609-1</id>
        <name>C'</name>
        <sequence type="displayed"/>
    </isoform>
    <isoform>
        <id>Q86609-2</id>
        <name>C</name>
        <sequence type="described" ref="VSP_025751"/>
    </isoform>
</comment>
<comment type="miscellaneous">
    <text evidence="2">The P gene has two overlapping open reading frames. One encodes the P protein and the other the C'/C proteins.</text>
</comment>
<comment type="similarity">
    <text evidence="3">Belongs to the rhabdoviruses C protein family.</text>
</comment>
<proteinExistence type="evidence at protein level"/>
<keyword id="KW-0024">Alternative initiation</keyword>
<keyword id="KW-1185">Reference proteome</keyword>
<organism>
    <name type="scientific">Vesicular stomatitis New Jersey virus (strain Ogden subtype Concan)</name>
    <name type="common">VSNJV</name>
    <dbReference type="NCBI Taxonomy" id="11283"/>
    <lineage>
        <taxon>Viruses</taxon>
        <taxon>Riboviria</taxon>
        <taxon>Orthornavirae</taxon>
        <taxon>Negarnaviricota</taxon>
        <taxon>Haploviricotina</taxon>
        <taxon>Monjiviricetes</taxon>
        <taxon>Mononegavirales</taxon>
        <taxon>Rhabdoviridae</taxon>
        <taxon>Alpharhabdovirinae</taxon>
        <taxon>Vesiculovirus</taxon>
        <taxon>Vesiculovirus newjersey</taxon>
    </lineage>
</organism>